<protein>
    <recommendedName>
        <fullName evidence="1">Phosphoribosylformylglycinamidine synthase subunit PurQ</fullName>
        <shortName evidence="1">FGAM synthase</shortName>
        <ecNumber evidence="1">6.3.5.3</ecNumber>
    </recommendedName>
    <alternativeName>
        <fullName evidence="1">Formylglycinamide ribonucleotide amidotransferase subunit I</fullName>
        <shortName evidence="1">FGAR amidotransferase I</shortName>
        <shortName evidence="1">FGAR-AT I</shortName>
    </alternativeName>
    <alternativeName>
        <fullName evidence="1">Glutaminase PurQ</fullName>
        <ecNumber evidence="1">3.5.1.2</ecNumber>
    </alternativeName>
    <alternativeName>
        <fullName evidence="1">Phosphoribosylformylglycinamidine synthase subunit I</fullName>
    </alternativeName>
</protein>
<proteinExistence type="inferred from homology"/>
<name>PURQ_NOVAD</name>
<keyword id="KW-0067">ATP-binding</keyword>
<keyword id="KW-0963">Cytoplasm</keyword>
<keyword id="KW-0315">Glutamine amidotransferase</keyword>
<keyword id="KW-0378">Hydrolase</keyword>
<keyword id="KW-0436">Ligase</keyword>
<keyword id="KW-0547">Nucleotide-binding</keyword>
<keyword id="KW-0658">Purine biosynthesis</keyword>
<keyword id="KW-1185">Reference proteome</keyword>
<reference key="1">
    <citation type="submission" date="2006-01" db="EMBL/GenBank/DDBJ databases">
        <title>Complete sequence of Novosphingobium aromaticivorans DSM 12444.</title>
        <authorList>
            <consortium name="US DOE Joint Genome Institute"/>
            <person name="Copeland A."/>
            <person name="Lucas S."/>
            <person name="Lapidus A."/>
            <person name="Barry K."/>
            <person name="Detter J.C."/>
            <person name="Glavina T."/>
            <person name="Hammon N."/>
            <person name="Israni S."/>
            <person name="Pitluck S."/>
            <person name="Chain P."/>
            <person name="Malfatti S."/>
            <person name="Shin M."/>
            <person name="Vergez L."/>
            <person name="Schmutz J."/>
            <person name="Larimer F."/>
            <person name="Land M."/>
            <person name="Kyrpides N."/>
            <person name="Ivanova N."/>
            <person name="Fredrickson J."/>
            <person name="Balkwill D."/>
            <person name="Romine M.F."/>
            <person name="Richardson P."/>
        </authorList>
    </citation>
    <scope>NUCLEOTIDE SEQUENCE [LARGE SCALE GENOMIC DNA]</scope>
    <source>
        <strain>ATCC 700278 / DSM 12444 / CCUG 56034 / CIP 105152 / NBRC 16084 / F199</strain>
    </source>
</reference>
<gene>
    <name evidence="1" type="primary">purQ</name>
    <name type="ordered locus">Saro_1032</name>
</gene>
<accession>Q2G9J6</accession>
<organism>
    <name type="scientific">Novosphingobium aromaticivorans (strain ATCC 700278 / DSM 12444 / CCUG 56034 / CIP 105152 / NBRC 16084 / F199)</name>
    <dbReference type="NCBI Taxonomy" id="279238"/>
    <lineage>
        <taxon>Bacteria</taxon>
        <taxon>Pseudomonadati</taxon>
        <taxon>Pseudomonadota</taxon>
        <taxon>Alphaproteobacteria</taxon>
        <taxon>Sphingomonadales</taxon>
        <taxon>Sphingomonadaceae</taxon>
        <taxon>Novosphingobium</taxon>
    </lineage>
</organism>
<sequence length="225" mass="23927">MAFTSAVITFPGSNCDRDMAVAIEQVCGGTVHRVWHGDADLPEGLDFIALPGGFSYGDYLRSGAMAARSPVMQAVVRAAERGVTVLGVCNGFQVLTEAGLLPGALMRNAGIRFVCRDVKLTVENNQSLFTAGYDAGQQITIPVAHHDGNYFADDATLDRIEGEGRVAFRYAEEVNGSARNIAGVLNDRGNVLGMMPHPERMIEAAHGGSDGRALFESVVRGLVEA</sequence>
<comment type="function">
    <text evidence="1">Part of the phosphoribosylformylglycinamidine synthase complex involved in the purines biosynthetic pathway. Catalyzes the ATP-dependent conversion of formylglycinamide ribonucleotide (FGAR) and glutamine to yield formylglycinamidine ribonucleotide (FGAM) and glutamate. The FGAM synthase complex is composed of three subunits. PurQ produces an ammonia molecule by converting glutamine to glutamate. PurL transfers the ammonia molecule to FGAR to form FGAM in an ATP-dependent manner. PurS interacts with PurQ and PurL and is thought to assist in the transfer of the ammonia molecule from PurQ to PurL.</text>
</comment>
<comment type="catalytic activity">
    <reaction evidence="1">
        <text>N(2)-formyl-N(1)-(5-phospho-beta-D-ribosyl)glycinamide + L-glutamine + ATP + H2O = 2-formamido-N(1)-(5-O-phospho-beta-D-ribosyl)acetamidine + L-glutamate + ADP + phosphate + H(+)</text>
        <dbReference type="Rhea" id="RHEA:17129"/>
        <dbReference type="ChEBI" id="CHEBI:15377"/>
        <dbReference type="ChEBI" id="CHEBI:15378"/>
        <dbReference type="ChEBI" id="CHEBI:29985"/>
        <dbReference type="ChEBI" id="CHEBI:30616"/>
        <dbReference type="ChEBI" id="CHEBI:43474"/>
        <dbReference type="ChEBI" id="CHEBI:58359"/>
        <dbReference type="ChEBI" id="CHEBI:147286"/>
        <dbReference type="ChEBI" id="CHEBI:147287"/>
        <dbReference type="ChEBI" id="CHEBI:456216"/>
        <dbReference type="EC" id="6.3.5.3"/>
    </reaction>
</comment>
<comment type="catalytic activity">
    <reaction evidence="1">
        <text>L-glutamine + H2O = L-glutamate + NH4(+)</text>
        <dbReference type="Rhea" id="RHEA:15889"/>
        <dbReference type="ChEBI" id="CHEBI:15377"/>
        <dbReference type="ChEBI" id="CHEBI:28938"/>
        <dbReference type="ChEBI" id="CHEBI:29985"/>
        <dbReference type="ChEBI" id="CHEBI:58359"/>
        <dbReference type="EC" id="3.5.1.2"/>
    </reaction>
</comment>
<comment type="pathway">
    <text evidence="1">Purine metabolism; IMP biosynthesis via de novo pathway; 5-amino-1-(5-phospho-D-ribosyl)imidazole from N(2)-formyl-N(1)-(5-phospho-D-ribosyl)glycinamide: step 1/2.</text>
</comment>
<comment type="subunit">
    <text evidence="1">Part of the FGAM synthase complex composed of 1 PurL, 1 PurQ and 2 PurS subunits.</text>
</comment>
<comment type="subcellular location">
    <subcellularLocation>
        <location evidence="1">Cytoplasm</location>
    </subcellularLocation>
</comment>
<feature type="chain" id="PRO_0000252715" description="Phosphoribosylformylglycinamidine synthase subunit PurQ">
    <location>
        <begin position="1"/>
        <end position="225"/>
    </location>
</feature>
<feature type="domain" description="Glutamine amidotransferase type-1" evidence="1">
    <location>
        <begin position="5"/>
        <end position="225"/>
    </location>
</feature>
<feature type="active site" description="Nucleophile" evidence="1">
    <location>
        <position position="89"/>
    </location>
</feature>
<feature type="active site" evidence="1">
    <location>
        <position position="197"/>
    </location>
</feature>
<feature type="active site" evidence="1">
    <location>
        <position position="199"/>
    </location>
</feature>
<evidence type="ECO:0000255" key="1">
    <source>
        <dbReference type="HAMAP-Rule" id="MF_00421"/>
    </source>
</evidence>
<dbReference type="EC" id="6.3.5.3" evidence="1"/>
<dbReference type="EC" id="3.5.1.2" evidence="1"/>
<dbReference type="EMBL" id="CP000248">
    <property type="protein sequence ID" value="ABD25477.1"/>
    <property type="molecule type" value="Genomic_DNA"/>
</dbReference>
<dbReference type="RefSeq" id="WP_011444691.1">
    <property type="nucleotide sequence ID" value="NC_007794.1"/>
</dbReference>
<dbReference type="SMR" id="Q2G9J6"/>
<dbReference type="STRING" id="279238.Saro_1032"/>
<dbReference type="KEGG" id="nar:Saro_1032"/>
<dbReference type="eggNOG" id="COG0047">
    <property type="taxonomic scope" value="Bacteria"/>
</dbReference>
<dbReference type="HOGENOM" id="CLU_001031_3_1_5"/>
<dbReference type="UniPathway" id="UPA00074">
    <property type="reaction ID" value="UER00128"/>
</dbReference>
<dbReference type="Proteomes" id="UP000009134">
    <property type="component" value="Chromosome"/>
</dbReference>
<dbReference type="GO" id="GO:0005737">
    <property type="term" value="C:cytoplasm"/>
    <property type="evidence" value="ECO:0007669"/>
    <property type="project" value="UniProtKB-SubCell"/>
</dbReference>
<dbReference type="GO" id="GO:0005524">
    <property type="term" value="F:ATP binding"/>
    <property type="evidence" value="ECO:0007669"/>
    <property type="project" value="UniProtKB-KW"/>
</dbReference>
<dbReference type="GO" id="GO:0004359">
    <property type="term" value="F:glutaminase activity"/>
    <property type="evidence" value="ECO:0007669"/>
    <property type="project" value="UniProtKB-EC"/>
</dbReference>
<dbReference type="GO" id="GO:0004642">
    <property type="term" value="F:phosphoribosylformylglycinamidine synthase activity"/>
    <property type="evidence" value="ECO:0007669"/>
    <property type="project" value="UniProtKB-UniRule"/>
</dbReference>
<dbReference type="GO" id="GO:0006189">
    <property type="term" value="P:'de novo' IMP biosynthetic process"/>
    <property type="evidence" value="ECO:0007669"/>
    <property type="project" value="UniProtKB-UniRule"/>
</dbReference>
<dbReference type="CDD" id="cd01740">
    <property type="entry name" value="GATase1_FGAR_AT"/>
    <property type="match status" value="1"/>
</dbReference>
<dbReference type="Gene3D" id="3.40.50.880">
    <property type="match status" value="1"/>
</dbReference>
<dbReference type="HAMAP" id="MF_00421">
    <property type="entry name" value="PurQ"/>
    <property type="match status" value="1"/>
</dbReference>
<dbReference type="InterPro" id="IPR029062">
    <property type="entry name" value="Class_I_gatase-like"/>
</dbReference>
<dbReference type="InterPro" id="IPR010075">
    <property type="entry name" value="PRibForGlyAmidine_synth_PurQ"/>
</dbReference>
<dbReference type="NCBIfam" id="TIGR01737">
    <property type="entry name" value="FGAM_synth_I"/>
    <property type="match status" value="1"/>
</dbReference>
<dbReference type="NCBIfam" id="NF002957">
    <property type="entry name" value="PRK03619.1"/>
    <property type="match status" value="1"/>
</dbReference>
<dbReference type="PANTHER" id="PTHR47552">
    <property type="entry name" value="PHOSPHORIBOSYLFORMYLGLYCINAMIDINE SYNTHASE SUBUNIT PURQ"/>
    <property type="match status" value="1"/>
</dbReference>
<dbReference type="PANTHER" id="PTHR47552:SF1">
    <property type="entry name" value="PHOSPHORIBOSYLFORMYLGLYCINAMIDINE SYNTHASE SUBUNIT PURQ"/>
    <property type="match status" value="1"/>
</dbReference>
<dbReference type="Pfam" id="PF13507">
    <property type="entry name" value="GATase_5"/>
    <property type="match status" value="1"/>
</dbReference>
<dbReference type="PIRSF" id="PIRSF001586">
    <property type="entry name" value="FGAM_synth_I"/>
    <property type="match status" value="1"/>
</dbReference>
<dbReference type="SMART" id="SM01211">
    <property type="entry name" value="GATase_5"/>
    <property type="match status" value="1"/>
</dbReference>
<dbReference type="SUPFAM" id="SSF52317">
    <property type="entry name" value="Class I glutamine amidotransferase-like"/>
    <property type="match status" value="1"/>
</dbReference>
<dbReference type="PROSITE" id="PS51273">
    <property type="entry name" value="GATASE_TYPE_1"/>
    <property type="match status" value="1"/>
</dbReference>